<organism>
    <name type="scientific">Aspergillus fumigatus (strain CBS 144.89 / FGSC A1163 / CEA10)</name>
    <name type="common">Neosartorya fumigata</name>
    <dbReference type="NCBI Taxonomy" id="451804"/>
    <lineage>
        <taxon>Eukaryota</taxon>
        <taxon>Fungi</taxon>
        <taxon>Dikarya</taxon>
        <taxon>Ascomycota</taxon>
        <taxon>Pezizomycotina</taxon>
        <taxon>Eurotiomycetes</taxon>
        <taxon>Eurotiomycetidae</taxon>
        <taxon>Eurotiales</taxon>
        <taxon>Aspergillaceae</taxon>
        <taxon>Aspergillus</taxon>
        <taxon>Aspergillus subgen. Fumigati</taxon>
    </lineage>
</organism>
<comment type="function">
    <text evidence="1">Hydrolyzes a variety of simple alpha-D-galactoside as well as more complex molecules such as oligosaccharides and polysaccharides.</text>
</comment>
<comment type="catalytic activity">
    <reaction>
        <text>Hydrolysis of terminal, non-reducing alpha-D-galactose residues in alpha-D-galactosides, including galactose oligosaccharides, galactomannans and galactolipids.</text>
        <dbReference type="EC" id="3.2.1.22"/>
    </reaction>
</comment>
<comment type="subcellular location">
    <subcellularLocation>
        <location evidence="1">Secreted</location>
    </subcellularLocation>
</comment>
<comment type="similarity">
    <text evidence="3">Belongs to the glycosyl hydrolase 27 family.</text>
</comment>
<comment type="sequence caution" evidence="3">
    <conflict type="erroneous gene model prediction">
        <sequence resource="EMBL-CDS" id="EDP47346"/>
    </conflict>
</comment>
<evidence type="ECO:0000250" key="1"/>
<evidence type="ECO:0000255" key="2"/>
<evidence type="ECO:0000305" key="3"/>
<keyword id="KW-0119">Carbohydrate metabolism</keyword>
<keyword id="KW-1015">Disulfide bond</keyword>
<keyword id="KW-0325">Glycoprotein</keyword>
<keyword id="KW-0326">Glycosidase</keyword>
<keyword id="KW-0378">Hydrolase</keyword>
<keyword id="KW-0624">Polysaccharide degradation</keyword>
<keyword id="KW-0964">Secreted</keyword>
<keyword id="KW-0732">Signal</keyword>
<sequence length="648" mass="70100">MEFIVSLLLLSPALVAGSLHSRIDNGLARTPQMGWNSYNYYSCSPNEAIIRSNAKALVDLGLAELGYRYVTTDCGWSVADRLPNGTLTWNETLFPSGFPAMGEYLHELGLLFGVYGDSGTKLCGSPPDQVGSLYHEEQDAKTFAEWGADSLKYDNCYSDAATNYPNVNYEPSTSPRPRYEIMSSALARVGRPILFQICEWGIDFPALWAPALGNSWRIGNDIIPAWRSIFRTLNQAVPNTDFAGPGQWADLDMLYVGNGVFSLPEEQTHFSLWAILKSPLTIGAALKDDDTSISQASLEVLKQKDVIGFNQDALGVSASLKRRWSDEGYEVWSGPLSGNRTVVAVINWRNESRDLTLDLPDVGLQYAQVARNIWGKTVVRDVRTSYTAGVAGHGTILLELQGTLPSGLYPAKIFAKSTGQRSTFESIYAATTSANYELAITFSRPSTETVTITTSSGQTVSISGKSGRIALTAGSNTITIQHKTPIESIQITPPTGTYYANTVFNVTGSAKHTTCGSGCSPVGSKIGYLSPTSNAYTSISTTTAGSKYLAIDYINNEVAFSSSWGWGSNSRNLTVSVNDGAPVRLEVPLSGRHSELYSPGKGWWDTATLGVLTSGWKKGENKVVFGNEGGEDGFQTYAADFVGVRVLD</sequence>
<name>AGALD_ASPFC</name>
<reference key="1">
    <citation type="journal article" date="2008" name="PLoS Genet.">
        <title>Genomic islands in the pathogenic filamentous fungus Aspergillus fumigatus.</title>
        <authorList>
            <person name="Fedorova N.D."/>
            <person name="Khaldi N."/>
            <person name="Joardar V.S."/>
            <person name="Maiti R."/>
            <person name="Amedeo P."/>
            <person name="Anderson M.J."/>
            <person name="Crabtree J."/>
            <person name="Silva J.C."/>
            <person name="Badger J.H."/>
            <person name="Albarraq A."/>
            <person name="Angiuoli S."/>
            <person name="Bussey H."/>
            <person name="Bowyer P."/>
            <person name="Cotty P.J."/>
            <person name="Dyer P.S."/>
            <person name="Egan A."/>
            <person name="Galens K."/>
            <person name="Fraser-Liggett C.M."/>
            <person name="Haas B.J."/>
            <person name="Inman J.M."/>
            <person name="Kent R."/>
            <person name="Lemieux S."/>
            <person name="Malavazi I."/>
            <person name="Orvis J."/>
            <person name="Roemer T."/>
            <person name="Ronning C.M."/>
            <person name="Sundaram J.P."/>
            <person name="Sutton G."/>
            <person name="Turner G."/>
            <person name="Venter J.C."/>
            <person name="White O.R."/>
            <person name="Whitty B.R."/>
            <person name="Youngman P."/>
            <person name="Wolfe K.H."/>
            <person name="Goldman G.H."/>
            <person name="Wortman J.R."/>
            <person name="Jiang B."/>
            <person name="Denning D.W."/>
            <person name="Nierman W.C."/>
        </authorList>
    </citation>
    <scope>NUCLEOTIDE SEQUENCE [LARGE SCALE GENOMIC DNA]</scope>
    <source>
        <strain>CBS 144.89 / FGSC A1163 / CEA10</strain>
    </source>
</reference>
<gene>
    <name type="primary">aglD</name>
    <name type="ORF">AFUB_099470</name>
</gene>
<proteinExistence type="inferred from homology"/>
<feature type="signal peptide" evidence="2">
    <location>
        <begin position="1"/>
        <end position="16"/>
    </location>
</feature>
<feature type="chain" id="PRO_0000395070" description="Probable alpha-galactosidase D">
    <location>
        <begin position="17"/>
        <end position="648"/>
    </location>
</feature>
<feature type="active site" description="Nucleophile" evidence="1">
    <location>
        <position position="154"/>
    </location>
</feature>
<feature type="active site" description="Proton donor" evidence="1">
    <location>
        <position position="221"/>
    </location>
</feature>
<feature type="binding site" evidence="1">
    <location>
        <begin position="199"/>
        <end position="203"/>
    </location>
    <ligand>
        <name>substrate</name>
    </ligand>
</feature>
<feature type="glycosylation site" description="N-linked (GlcNAc...) asparagine" evidence="2">
    <location>
        <position position="84"/>
    </location>
</feature>
<feature type="glycosylation site" description="N-linked (GlcNAc...) asparagine" evidence="2">
    <location>
        <position position="90"/>
    </location>
</feature>
<feature type="glycosylation site" description="N-linked (GlcNAc...) asparagine" evidence="2">
    <location>
        <position position="339"/>
    </location>
</feature>
<feature type="glycosylation site" description="N-linked (GlcNAc...) asparagine" evidence="2">
    <location>
        <position position="350"/>
    </location>
</feature>
<feature type="glycosylation site" description="N-linked (GlcNAc...) asparagine" evidence="2">
    <location>
        <position position="505"/>
    </location>
</feature>
<feature type="glycosylation site" description="N-linked (GlcNAc...) asparagine" evidence="2">
    <location>
        <position position="572"/>
    </location>
</feature>
<feature type="disulfide bond" evidence="1">
    <location>
        <begin position="123"/>
        <end position="156"/>
    </location>
</feature>
<protein>
    <recommendedName>
        <fullName>Probable alpha-galactosidase D</fullName>
        <ecNumber>3.2.1.22</ecNumber>
    </recommendedName>
    <alternativeName>
        <fullName>Melibiase D</fullName>
    </alternativeName>
</protein>
<accession>B0YEK2</accession>
<dbReference type="EC" id="3.2.1.22"/>
<dbReference type="EMBL" id="DS499603">
    <property type="protein sequence ID" value="EDP47346.1"/>
    <property type="status" value="ALT_SEQ"/>
    <property type="molecule type" value="Genomic_DNA"/>
</dbReference>
<dbReference type="SMR" id="B0YEK2"/>
<dbReference type="GlyCosmos" id="B0YEK2">
    <property type="glycosylation" value="6 sites, No reported glycans"/>
</dbReference>
<dbReference type="OrthoDB" id="119607at5052"/>
<dbReference type="PhylomeDB" id="B0YEK2"/>
<dbReference type="Proteomes" id="UP000001699">
    <property type="component" value="Unassembled WGS sequence"/>
</dbReference>
<dbReference type="GO" id="GO:0005576">
    <property type="term" value="C:extracellular region"/>
    <property type="evidence" value="ECO:0007669"/>
    <property type="project" value="UniProtKB-SubCell"/>
</dbReference>
<dbReference type="GO" id="GO:0004557">
    <property type="term" value="F:alpha-galactosidase activity"/>
    <property type="evidence" value="ECO:0007669"/>
    <property type="project" value="UniProtKB-EC"/>
</dbReference>
<dbReference type="GO" id="GO:0000272">
    <property type="term" value="P:polysaccharide catabolic process"/>
    <property type="evidence" value="ECO:0007669"/>
    <property type="project" value="UniProtKB-KW"/>
</dbReference>
<dbReference type="CDD" id="cd04081">
    <property type="entry name" value="CBM35_galactosidase-like"/>
    <property type="match status" value="1"/>
</dbReference>
<dbReference type="CDD" id="cd14792">
    <property type="entry name" value="GH27"/>
    <property type="match status" value="1"/>
</dbReference>
<dbReference type="FunFam" id="2.60.40.1180:FF:000008">
    <property type="entry name" value="Alpha-galactosidase"/>
    <property type="match status" value="1"/>
</dbReference>
<dbReference type="FunFam" id="3.20.20.70:FF:000197">
    <property type="entry name" value="Alpha-galactosidase"/>
    <property type="match status" value="1"/>
</dbReference>
<dbReference type="FunFam" id="2.60.120.260:FF:000162">
    <property type="entry name" value="Probable alpha-galactosidase D"/>
    <property type="match status" value="1"/>
</dbReference>
<dbReference type="Gene3D" id="3.20.20.70">
    <property type="entry name" value="Aldolase class I"/>
    <property type="match status" value="1"/>
</dbReference>
<dbReference type="Gene3D" id="2.60.120.260">
    <property type="entry name" value="Galactose-binding domain-like"/>
    <property type="match status" value="1"/>
</dbReference>
<dbReference type="Gene3D" id="2.60.40.1180">
    <property type="entry name" value="Golgi alpha-mannosidase II"/>
    <property type="match status" value="1"/>
</dbReference>
<dbReference type="InterPro" id="IPR013785">
    <property type="entry name" value="Aldolase_TIM"/>
</dbReference>
<dbReference type="InterPro" id="IPR002241">
    <property type="entry name" value="Glyco_hydro_27"/>
</dbReference>
<dbReference type="InterPro" id="IPR013780">
    <property type="entry name" value="Glyco_hydro_b"/>
</dbReference>
<dbReference type="InterPro" id="IPR017853">
    <property type="entry name" value="Glycoside_hydrolase_SF"/>
</dbReference>
<dbReference type="InterPro" id="IPR041233">
    <property type="entry name" value="Melibiase_C"/>
</dbReference>
<dbReference type="PANTHER" id="PTHR11452:SF75">
    <property type="entry name" value="ALPHA-GALACTOSIDASE MEL1"/>
    <property type="match status" value="1"/>
</dbReference>
<dbReference type="PANTHER" id="PTHR11452">
    <property type="entry name" value="ALPHA-GALACTOSIDASE/ALPHA-N-ACETYLGALACTOSAMINIDASE"/>
    <property type="match status" value="1"/>
</dbReference>
<dbReference type="Pfam" id="PF16499">
    <property type="entry name" value="Melibiase_2"/>
    <property type="match status" value="1"/>
</dbReference>
<dbReference type="Pfam" id="PF17801">
    <property type="entry name" value="Melibiase_C"/>
    <property type="match status" value="1"/>
</dbReference>
<dbReference type="PRINTS" id="PR00740">
    <property type="entry name" value="GLHYDRLASE27"/>
</dbReference>
<dbReference type="SUPFAM" id="SSF51445">
    <property type="entry name" value="(Trans)glycosidases"/>
    <property type="match status" value="1"/>
</dbReference>
<dbReference type="SUPFAM" id="SSF51011">
    <property type="entry name" value="Glycosyl hydrolase domain"/>
    <property type="match status" value="1"/>
</dbReference>